<feature type="chain" id="PRO_0000198547" description="Ribonuclease P protein component">
    <location>
        <begin position="1"/>
        <end position="111"/>
    </location>
</feature>
<proteinExistence type="inferred from homology"/>
<gene>
    <name evidence="1" type="primary">rnpA</name>
    <name type="ordered locus">stu1811</name>
</gene>
<evidence type="ECO:0000255" key="1">
    <source>
        <dbReference type="HAMAP-Rule" id="MF_00227"/>
    </source>
</evidence>
<reference key="1">
    <citation type="journal article" date="2004" name="Nat. Biotechnol.">
        <title>Complete sequence and comparative genome analysis of the dairy bacterium Streptococcus thermophilus.</title>
        <authorList>
            <person name="Bolotin A."/>
            <person name="Quinquis B."/>
            <person name="Renault P."/>
            <person name="Sorokin A."/>
            <person name="Ehrlich S.D."/>
            <person name="Kulakauskas S."/>
            <person name="Lapidus A."/>
            <person name="Goltsman E."/>
            <person name="Mazur M."/>
            <person name="Pusch G.D."/>
            <person name="Fonstein M."/>
            <person name="Overbeek R."/>
            <person name="Kyprides N."/>
            <person name="Purnelle B."/>
            <person name="Prozzi D."/>
            <person name="Ngui K."/>
            <person name="Masuy D."/>
            <person name="Hancy F."/>
            <person name="Burteau S."/>
            <person name="Boutry M."/>
            <person name="Delcour J."/>
            <person name="Goffeau A."/>
            <person name="Hols P."/>
        </authorList>
    </citation>
    <scope>NUCLEOTIDE SEQUENCE [LARGE SCALE GENOMIC DNA]</scope>
    <source>
        <strain>ATCC BAA-250 / LMG 18311</strain>
    </source>
</reference>
<name>RNPA_STRT2</name>
<organism>
    <name type="scientific">Streptococcus thermophilus (strain ATCC BAA-250 / LMG 18311)</name>
    <dbReference type="NCBI Taxonomy" id="264199"/>
    <lineage>
        <taxon>Bacteria</taxon>
        <taxon>Bacillati</taxon>
        <taxon>Bacillota</taxon>
        <taxon>Bacilli</taxon>
        <taxon>Lactobacillales</taxon>
        <taxon>Streptococcaceae</taxon>
        <taxon>Streptococcus</taxon>
    </lineage>
</organism>
<accession>Q5M2K4</accession>
<sequence>MKKSYRVKKEKDFKALFDAGHSVANRKFVVYCLDRNLPHFRVGLSVSKHLGNAVTRNRVKRRLRHALMDMSSQLEHQDFVVIARKGVEDLSYQDIYSNLVHVLKIAKLYKD</sequence>
<comment type="function">
    <text evidence="1">RNaseP catalyzes the removal of the 5'-leader sequence from pre-tRNA to produce the mature 5'-terminus. It can also cleave other RNA substrates such as 4.5S RNA. The protein component plays an auxiliary but essential role in vivo by binding to the 5'-leader sequence and broadening the substrate specificity of the ribozyme.</text>
</comment>
<comment type="catalytic activity">
    <reaction evidence="1">
        <text>Endonucleolytic cleavage of RNA, removing 5'-extranucleotides from tRNA precursor.</text>
        <dbReference type="EC" id="3.1.26.5"/>
    </reaction>
</comment>
<comment type="subunit">
    <text evidence="1">Consists of a catalytic RNA component (M1 or rnpB) and a protein subunit.</text>
</comment>
<comment type="similarity">
    <text evidence="1">Belongs to the RnpA family.</text>
</comment>
<keyword id="KW-0255">Endonuclease</keyword>
<keyword id="KW-0378">Hydrolase</keyword>
<keyword id="KW-0540">Nuclease</keyword>
<keyword id="KW-1185">Reference proteome</keyword>
<keyword id="KW-0694">RNA-binding</keyword>
<keyword id="KW-0819">tRNA processing</keyword>
<protein>
    <recommendedName>
        <fullName evidence="1">Ribonuclease P protein component</fullName>
        <shortName evidence="1">RNase P protein</shortName>
        <shortName evidence="1">RNaseP protein</shortName>
        <ecNumber evidence="1">3.1.26.5</ecNumber>
    </recommendedName>
    <alternativeName>
        <fullName evidence="1">Protein C5</fullName>
    </alternativeName>
</protein>
<dbReference type="EC" id="3.1.26.5" evidence="1"/>
<dbReference type="EMBL" id="CP000023">
    <property type="protein sequence ID" value="AAV61410.1"/>
    <property type="molecule type" value="Genomic_DNA"/>
</dbReference>
<dbReference type="RefSeq" id="WP_002953528.1">
    <property type="nucleotide sequence ID" value="NC_006448.1"/>
</dbReference>
<dbReference type="SMR" id="Q5M2K4"/>
<dbReference type="STRING" id="264199.stu1811"/>
<dbReference type="GeneID" id="66899548"/>
<dbReference type="KEGG" id="stl:stu1811"/>
<dbReference type="eggNOG" id="COG0594">
    <property type="taxonomic scope" value="Bacteria"/>
</dbReference>
<dbReference type="HOGENOM" id="CLU_117179_9_1_9"/>
<dbReference type="Proteomes" id="UP000001170">
    <property type="component" value="Chromosome"/>
</dbReference>
<dbReference type="GO" id="GO:0030677">
    <property type="term" value="C:ribonuclease P complex"/>
    <property type="evidence" value="ECO:0007669"/>
    <property type="project" value="TreeGrafter"/>
</dbReference>
<dbReference type="GO" id="GO:0042781">
    <property type="term" value="F:3'-tRNA processing endoribonuclease activity"/>
    <property type="evidence" value="ECO:0007669"/>
    <property type="project" value="TreeGrafter"/>
</dbReference>
<dbReference type="GO" id="GO:0004526">
    <property type="term" value="F:ribonuclease P activity"/>
    <property type="evidence" value="ECO:0007669"/>
    <property type="project" value="UniProtKB-UniRule"/>
</dbReference>
<dbReference type="GO" id="GO:0000049">
    <property type="term" value="F:tRNA binding"/>
    <property type="evidence" value="ECO:0007669"/>
    <property type="project" value="UniProtKB-UniRule"/>
</dbReference>
<dbReference type="GO" id="GO:0001682">
    <property type="term" value="P:tRNA 5'-leader removal"/>
    <property type="evidence" value="ECO:0007669"/>
    <property type="project" value="UniProtKB-UniRule"/>
</dbReference>
<dbReference type="FunFam" id="3.30.230.10:FF:000021">
    <property type="entry name" value="Ribonuclease P protein component"/>
    <property type="match status" value="1"/>
</dbReference>
<dbReference type="Gene3D" id="3.30.230.10">
    <property type="match status" value="1"/>
</dbReference>
<dbReference type="HAMAP" id="MF_00227">
    <property type="entry name" value="RNase_P"/>
    <property type="match status" value="1"/>
</dbReference>
<dbReference type="InterPro" id="IPR020568">
    <property type="entry name" value="Ribosomal_Su5_D2-typ_SF"/>
</dbReference>
<dbReference type="InterPro" id="IPR014721">
    <property type="entry name" value="Ribsml_uS5_D2-typ_fold_subgr"/>
</dbReference>
<dbReference type="InterPro" id="IPR000100">
    <property type="entry name" value="RNase_P"/>
</dbReference>
<dbReference type="InterPro" id="IPR020539">
    <property type="entry name" value="RNase_P_CS"/>
</dbReference>
<dbReference type="NCBIfam" id="TIGR00188">
    <property type="entry name" value="rnpA"/>
    <property type="match status" value="1"/>
</dbReference>
<dbReference type="PANTHER" id="PTHR33992">
    <property type="entry name" value="RIBONUCLEASE P PROTEIN COMPONENT"/>
    <property type="match status" value="1"/>
</dbReference>
<dbReference type="PANTHER" id="PTHR33992:SF1">
    <property type="entry name" value="RIBONUCLEASE P PROTEIN COMPONENT"/>
    <property type="match status" value="1"/>
</dbReference>
<dbReference type="Pfam" id="PF00825">
    <property type="entry name" value="Ribonuclease_P"/>
    <property type="match status" value="1"/>
</dbReference>
<dbReference type="SUPFAM" id="SSF54211">
    <property type="entry name" value="Ribosomal protein S5 domain 2-like"/>
    <property type="match status" value="1"/>
</dbReference>
<dbReference type="PROSITE" id="PS00648">
    <property type="entry name" value="RIBONUCLEASE_P"/>
    <property type="match status" value="1"/>
</dbReference>